<feature type="chain" id="PRO_0000078203" description="Snaclec multactivase regulatory subunit">
    <location>
        <begin position="1"/>
        <end position="29" status="greater than"/>
    </location>
</feature>
<feature type="domain" description="C-type lectin" evidence="1">
    <location>
        <begin position="1"/>
        <end position="29" status="greater than"/>
    </location>
</feature>
<feature type="disulfide bond" evidence="1">
    <location>
        <begin position="2"/>
        <end position="13"/>
    </location>
</feature>
<feature type="non-terminal residue">
    <location>
        <position position="29"/>
    </location>
</feature>
<proteinExistence type="evidence at protein level"/>
<organism evidence="2">
    <name type="scientific">Echis multisquamatus</name>
    <name type="common">Central Asian sand viper</name>
    <dbReference type="NCBI Taxonomy" id="93050"/>
    <lineage>
        <taxon>Eukaryota</taxon>
        <taxon>Metazoa</taxon>
        <taxon>Chordata</taxon>
        <taxon>Craniata</taxon>
        <taxon>Vertebrata</taxon>
        <taxon>Euteleostomi</taxon>
        <taxon>Lepidosauria</taxon>
        <taxon>Squamata</taxon>
        <taxon>Bifurcata</taxon>
        <taxon>Unidentata</taxon>
        <taxon>Episquamata</taxon>
        <taxon>Toxicofera</taxon>
        <taxon>Serpentes</taxon>
        <taxon>Colubroidea</taxon>
        <taxon>Viperidae</taxon>
        <taxon>Viperinae</taxon>
        <taxon>Echis</taxon>
    </lineage>
</organism>
<comment type="function">
    <text>Multactivase, a carinactivase-like calcium-dependent prothrombin activator, activates prothrombin via recognition of the calcium ion bound conformation of its gamma-carboxyglutamic acid (GLA) domain, and the subsequent conversion of prothrombin to active thrombin is catalyzed by the catalytic subunit.</text>
</comment>
<comment type="subunit">
    <text>Heterodimer of a metalloproteinase subunit and a regulatory subunit comprising two homologous polypeptides disulfide-linked.</text>
</comment>
<comment type="subcellular location">
    <subcellularLocation>
        <location>Secreted</location>
    </subcellularLocation>
</comment>
<comment type="tissue specificity">
    <text>Expressed by the venom gland.</text>
</comment>
<comment type="similarity">
    <text evidence="2">Belongs to the snaclec family.</text>
</comment>
<name>SLR_ECHML</name>
<keyword id="KW-1204">Blood coagulation cascade activating toxin</keyword>
<keyword id="KW-0106">Calcium</keyword>
<keyword id="KW-1217">Cell adhesion impairing toxin</keyword>
<keyword id="KW-0903">Direct protein sequencing</keyword>
<keyword id="KW-1015">Disulfide bond</keyword>
<keyword id="KW-1199">Hemostasis impairing toxin</keyword>
<keyword id="KW-0655">Prothrombin activator</keyword>
<keyword id="KW-0964">Secreted</keyword>
<keyword id="KW-0800">Toxin</keyword>
<protein>
    <recommendedName>
        <fullName>Snaclec multactivase regulatory subunit</fullName>
    </recommendedName>
</protein>
<sequence>DCLPGWSVYEGRCYKVFNQKTWKAAEKFC</sequence>
<accession>P81798</accession>
<reference evidence="2" key="1">
    <citation type="journal article" date="1997" name="J. Biochem.">
        <title>Purification and characterization of a Ca2+ -dependent prothrombin activator, multactivase, from the venom of Echis multisquamatus.</title>
        <authorList>
            <person name="Yamada D."/>
            <person name="Morita T."/>
        </authorList>
    </citation>
    <scope>PROTEIN SEQUENCE</scope>
    <source>
        <tissue>Venom</tissue>
    </source>
</reference>
<evidence type="ECO:0000255" key="1">
    <source>
        <dbReference type="PROSITE-ProRule" id="PRU00040"/>
    </source>
</evidence>
<evidence type="ECO:0000305" key="2"/>
<dbReference type="PIR" id="PC4421">
    <property type="entry name" value="PC4421"/>
</dbReference>
<dbReference type="SMR" id="P81798"/>
<dbReference type="GO" id="GO:0005576">
    <property type="term" value="C:extracellular region"/>
    <property type="evidence" value="ECO:0007669"/>
    <property type="project" value="UniProtKB-SubCell"/>
</dbReference>
<dbReference type="GO" id="GO:0016504">
    <property type="term" value="F:peptidase activator activity"/>
    <property type="evidence" value="ECO:0007669"/>
    <property type="project" value="UniProtKB-KW"/>
</dbReference>
<dbReference type="GO" id="GO:0090729">
    <property type="term" value="F:toxin activity"/>
    <property type="evidence" value="ECO:0007669"/>
    <property type="project" value="UniProtKB-KW"/>
</dbReference>
<dbReference type="Gene3D" id="3.10.100.10">
    <property type="entry name" value="Mannose-Binding Protein A, subunit A"/>
    <property type="match status" value="1"/>
</dbReference>
<dbReference type="InterPro" id="IPR016186">
    <property type="entry name" value="C-type_lectin-like/link_sf"/>
</dbReference>
<dbReference type="InterPro" id="IPR016187">
    <property type="entry name" value="CTDL_fold"/>
</dbReference>
<dbReference type="SUPFAM" id="SSF56436">
    <property type="entry name" value="C-type lectin-like"/>
    <property type="match status" value="1"/>
</dbReference>